<protein>
    <recommendedName>
        <fullName evidence="1">Large ribosomal subunit protein uL5</fullName>
    </recommendedName>
    <alternativeName>
        <fullName evidence="2">50S ribosomal protein L5</fullName>
    </alternativeName>
</protein>
<proteinExistence type="inferred from homology"/>
<accession>A0RVY6</accession>
<keyword id="KW-1185">Reference proteome</keyword>
<keyword id="KW-0687">Ribonucleoprotein</keyword>
<keyword id="KW-0689">Ribosomal protein</keyword>
<keyword id="KW-0694">RNA-binding</keyword>
<keyword id="KW-0699">rRNA-binding</keyword>
<keyword id="KW-0820">tRNA-binding</keyword>
<dbReference type="EMBL" id="DP000238">
    <property type="protein sequence ID" value="ABK77503.1"/>
    <property type="molecule type" value="Genomic_DNA"/>
</dbReference>
<dbReference type="SMR" id="A0RVY6"/>
<dbReference type="STRING" id="414004.CENSYa_0870"/>
<dbReference type="EnsemblBacteria" id="ABK77503">
    <property type="protein sequence ID" value="ABK77503"/>
    <property type="gene ID" value="CENSYa_0870"/>
</dbReference>
<dbReference type="KEGG" id="csy:CENSYa_0870"/>
<dbReference type="HOGENOM" id="CLU_061015_3_0_2"/>
<dbReference type="Proteomes" id="UP000000758">
    <property type="component" value="Chromosome"/>
</dbReference>
<dbReference type="GO" id="GO:1990904">
    <property type="term" value="C:ribonucleoprotein complex"/>
    <property type="evidence" value="ECO:0007669"/>
    <property type="project" value="UniProtKB-KW"/>
</dbReference>
<dbReference type="GO" id="GO:0005840">
    <property type="term" value="C:ribosome"/>
    <property type="evidence" value="ECO:0007669"/>
    <property type="project" value="UniProtKB-KW"/>
</dbReference>
<dbReference type="GO" id="GO:0019843">
    <property type="term" value="F:rRNA binding"/>
    <property type="evidence" value="ECO:0007669"/>
    <property type="project" value="UniProtKB-UniRule"/>
</dbReference>
<dbReference type="GO" id="GO:0003735">
    <property type="term" value="F:structural constituent of ribosome"/>
    <property type="evidence" value="ECO:0007669"/>
    <property type="project" value="InterPro"/>
</dbReference>
<dbReference type="GO" id="GO:0000049">
    <property type="term" value="F:tRNA binding"/>
    <property type="evidence" value="ECO:0007669"/>
    <property type="project" value="UniProtKB-UniRule"/>
</dbReference>
<dbReference type="GO" id="GO:0006412">
    <property type="term" value="P:translation"/>
    <property type="evidence" value="ECO:0007669"/>
    <property type="project" value="UniProtKB-UniRule"/>
</dbReference>
<dbReference type="FunFam" id="3.30.1440.10:FF:000002">
    <property type="entry name" value="60S ribosomal protein L11"/>
    <property type="match status" value="1"/>
</dbReference>
<dbReference type="Gene3D" id="3.30.1440.10">
    <property type="match status" value="1"/>
</dbReference>
<dbReference type="HAMAP" id="MF_01333_A">
    <property type="entry name" value="Ribosomal_uL5_A"/>
    <property type="match status" value="1"/>
</dbReference>
<dbReference type="InterPro" id="IPR002132">
    <property type="entry name" value="Ribosomal_uL5"/>
</dbReference>
<dbReference type="InterPro" id="IPR022804">
    <property type="entry name" value="Ribosomal_uL5_arc"/>
</dbReference>
<dbReference type="InterPro" id="IPR031309">
    <property type="entry name" value="Ribosomal_uL5_C"/>
</dbReference>
<dbReference type="InterPro" id="IPR022803">
    <property type="entry name" value="Ribosomal_uL5_dom_sf"/>
</dbReference>
<dbReference type="InterPro" id="IPR031310">
    <property type="entry name" value="Ribosomal_uL5_N"/>
</dbReference>
<dbReference type="NCBIfam" id="NF003258">
    <property type="entry name" value="PRK04219.1"/>
    <property type="match status" value="1"/>
</dbReference>
<dbReference type="PANTHER" id="PTHR11994">
    <property type="entry name" value="60S RIBOSOMAL PROTEIN L11-RELATED"/>
    <property type="match status" value="1"/>
</dbReference>
<dbReference type="Pfam" id="PF00281">
    <property type="entry name" value="Ribosomal_L5"/>
    <property type="match status" value="1"/>
</dbReference>
<dbReference type="Pfam" id="PF00673">
    <property type="entry name" value="Ribosomal_L5_C"/>
    <property type="match status" value="1"/>
</dbReference>
<dbReference type="PIRSF" id="PIRSF002161">
    <property type="entry name" value="Ribosomal_L5"/>
    <property type="match status" value="1"/>
</dbReference>
<dbReference type="SUPFAM" id="SSF55282">
    <property type="entry name" value="RL5-like"/>
    <property type="match status" value="1"/>
</dbReference>
<comment type="function">
    <text evidence="1">This is one of the proteins that bind and probably mediate the attachment of the 5S RNA into the large ribosomal subunit, where it forms part of the central protuberance. In the 70S ribosome it contacts protein S13 of the 30S subunit (bridge B1b), connecting the 2 subunits; this bridge is implicated in subunit movement. May contact the P site tRNA; the 5S rRNA and some of its associated proteins might help stabilize positioning of ribosome-bound tRNAs.</text>
</comment>
<comment type="subunit">
    <text evidence="1">Part of the 50S ribosomal subunit; contacts the 5S rRNA and probably tRNA. Forms a bridge to the 30S subunit in the 70S ribosome.</text>
</comment>
<comment type="similarity">
    <text evidence="1">Belongs to the universal ribosomal protein uL5 family.</text>
</comment>
<sequence length="169" mass="18209">MAGDMRKITLEKVVLNMGVGQSGNAVEVAKRALGEISGKKPCGRDAHETQRDFGVRKGEPIGAAVTIRGEDAGALARRLFEAKGGQVKGRSFDDFGNFSFGIGEHIDIPGIKYDPGIGILGLDVCMTLSRPGYGIRKRSKHKARVGRSHRITATEAKDFVVREFGVEIV</sequence>
<feature type="chain" id="PRO_0000365640" description="Large ribosomal subunit protein uL5">
    <location>
        <begin position="1"/>
        <end position="169"/>
    </location>
</feature>
<gene>
    <name evidence="1" type="primary">rpl5</name>
    <name type="ordered locus">CENSYa_0870</name>
</gene>
<evidence type="ECO:0000255" key="1">
    <source>
        <dbReference type="HAMAP-Rule" id="MF_01333"/>
    </source>
</evidence>
<evidence type="ECO:0000305" key="2"/>
<name>RL5_CENSY</name>
<reference key="1">
    <citation type="journal article" date="2006" name="Proc. Natl. Acad. Sci. U.S.A.">
        <title>Genomic analysis of the uncultivated marine crenarchaeote Cenarchaeum symbiosum.</title>
        <authorList>
            <person name="Hallam S.J."/>
            <person name="Konstantinidis K.T."/>
            <person name="Putnam N."/>
            <person name="Schleper C."/>
            <person name="Watanabe Y."/>
            <person name="Sugahara J."/>
            <person name="Preston C."/>
            <person name="de la Torre J."/>
            <person name="Richardson P.M."/>
            <person name="DeLong E.F."/>
        </authorList>
    </citation>
    <scope>NUCLEOTIDE SEQUENCE [LARGE SCALE GENOMIC DNA]</scope>
    <source>
        <strain>A</strain>
    </source>
</reference>
<organism>
    <name type="scientific">Cenarchaeum symbiosum (strain A)</name>
    <dbReference type="NCBI Taxonomy" id="414004"/>
    <lineage>
        <taxon>Archaea</taxon>
        <taxon>Nitrososphaerota</taxon>
        <taxon>Candidatus Cenarchaeales</taxon>
        <taxon>Candidatus Cenarchaeaceae</taxon>
        <taxon>Candidatus Cenarchaeum</taxon>
    </lineage>
</organism>